<dbReference type="EC" id="4.6.1.17" evidence="1"/>
<dbReference type="EMBL" id="CP000440">
    <property type="protein sequence ID" value="ABI88241.1"/>
    <property type="molecule type" value="Genomic_DNA"/>
</dbReference>
<dbReference type="RefSeq" id="WP_011657821.1">
    <property type="nucleotide sequence ID" value="NZ_CP009798.1"/>
</dbReference>
<dbReference type="SMR" id="Q0BC82"/>
<dbReference type="GeneID" id="93085113"/>
<dbReference type="KEGG" id="bam:Bamb_2685"/>
<dbReference type="PATRIC" id="fig|339670.21.peg.2211"/>
<dbReference type="eggNOG" id="COG0315">
    <property type="taxonomic scope" value="Bacteria"/>
</dbReference>
<dbReference type="UniPathway" id="UPA00344"/>
<dbReference type="Proteomes" id="UP000000662">
    <property type="component" value="Chromosome 1"/>
</dbReference>
<dbReference type="GO" id="GO:0061799">
    <property type="term" value="F:cyclic pyranopterin monophosphate synthase activity"/>
    <property type="evidence" value="ECO:0007669"/>
    <property type="project" value="UniProtKB-UniRule"/>
</dbReference>
<dbReference type="GO" id="GO:0006777">
    <property type="term" value="P:Mo-molybdopterin cofactor biosynthetic process"/>
    <property type="evidence" value="ECO:0007669"/>
    <property type="project" value="UniProtKB-UniRule"/>
</dbReference>
<dbReference type="CDD" id="cd01420">
    <property type="entry name" value="MoaC_PE"/>
    <property type="match status" value="1"/>
</dbReference>
<dbReference type="Gene3D" id="3.30.70.640">
    <property type="entry name" value="Molybdopterin cofactor biosynthesis C (MoaC) domain"/>
    <property type="match status" value="1"/>
</dbReference>
<dbReference type="HAMAP" id="MF_01224_B">
    <property type="entry name" value="MoaC_B"/>
    <property type="match status" value="1"/>
</dbReference>
<dbReference type="InterPro" id="IPR023045">
    <property type="entry name" value="MoaC"/>
</dbReference>
<dbReference type="InterPro" id="IPR047594">
    <property type="entry name" value="MoaC_bact/euk"/>
</dbReference>
<dbReference type="InterPro" id="IPR036522">
    <property type="entry name" value="MoaC_sf"/>
</dbReference>
<dbReference type="InterPro" id="IPR050105">
    <property type="entry name" value="MoCo_biosynth_MoaA/MoaC"/>
</dbReference>
<dbReference type="InterPro" id="IPR002820">
    <property type="entry name" value="Mopterin_CF_biosynth-C_dom"/>
</dbReference>
<dbReference type="NCBIfam" id="TIGR00581">
    <property type="entry name" value="moaC"/>
    <property type="match status" value="1"/>
</dbReference>
<dbReference type="NCBIfam" id="NF006870">
    <property type="entry name" value="PRK09364.1"/>
    <property type="match status" value="1"/>
</dbReference>
<dbReference type="PANTHER" id="PTHR22960:SF29">
    <property type="entry name" value="CYCLIC PYRANOPTERIN MONOPHOSPHATE SYNTHASE"/>
    <property type="match status" value="1"/>
</dbReference>
<dbReference type="PANTHER" id="PTHR22960">
    <property type="entry name" value="MOLYBDOPTERIN COFACTOR SYNTHESIS PROTEIN A"/>
    <property type="match status" value="1"/>
</dbReference>
<dbReference type="Pfam" id="PF01967">
    <property type="entry name" value="MoaC"/>
    <property type="match status" value="1"/>
</dbReference>
<dbReference type="SUPFAM" id="SSF55040">
    <property type="entry name" value="Molybdenum cofactor biosynthesis protein C, MoaC"/>
    <property type="match status" value="1"/>
</dbReference>
<name>MOAC_BURCM</name>
<sequence length="162" mass="17180">MSGLTHFDAAGHAHMVDVGGKQETQRIAIARGTIRMLPATFALIRDGKAKKGDVLGVARIAAIQGAKRTADLIPLCHPLALTRVAVDFELDDALPGVHCVAQVETFGRTGVEMEALTAVQVGLLTVYDMCKAVDRGMVITEVSVREKRGGKSGDWKAEDTAG</sequence>
<evidence type="ECO:0000255" key="1">
    <source>
        <dbReference type="HAMAP-Rule" id="MF_01224"/>
    </source>
</evidence>
<accession>Q0BC82</accession>
<proteinExistence type="inferred from homology"/>
<gene>
    <name evidence="1" type="primary">moaC</name>
    <name type="ordered locus">Bamb_2685</name>
</gene>
<feature type="chain" id="PRO_1000054077" description="Cyclic pyranopterin monophosphate synthase">
    <location>
        <begin position="1"/>
        <end position="162"/>
    </location>
</feature>
<feature type="active site" evidence="1">
    <location>
        <position position="128"/>
    </location>
</feature>
<feature type="binding site" evidence="1">
    <location>
        <begin position="75"/>
        <end position="77"/>
    </location>
    <ligand>
        <name>substrate</name>
    </ligand>
</feature>
<feature type="binding site" evidence="1">
    <location>
        <begin position="113"/>
        <end position="114"/>
    </location>
    <ligand>
        <name>substrate</name>
    </ligand>
</feature>
<organism>
    <name type="scientific">Burkholderia ambifaria (strain ATCC BAA-244 / DSM 16087 / CCUG 44356 / LMG 19182 / AMMD)</name>
    <name type="common">Burkholderia cepacia (strain AMMD)</name>
    <dbReference type="NCBI Taxonomy" id="339670"/>
    <lineage>
        <taxon>Bacteria</taxon>
        <taxon>Pseudomonadati</taxon>
        <taxon>Pseudomonadota</taxon>
        <taxon>Betaproteobacteria</taxon>
        <taxon>Burkholderiales</taxon>
        <taxon>Burkholderiaceae</taxon>
        <taxon>Burkholderia</taxon>
        <taxon>Burkholderia cepacia complex</taxon>
    </lineage>
</organism>
<comment type="function">
    <text evidence="1">Catalyzes the conversion of (8S)-3',8-cyclo-7,8-dihydroguanosine 5'-triphosphate to cyclic pyranopterin monophosphate (cPMP).</text>
</comment>
<comment type="catalytic activity">
    <reaction evidence="1">
        <text>(8S)-3',8-cyclo-7,8-dihydroguanosine 5'-triphosphate = cyclic pyranopterin phosphate + diphosphate</text>
        <dbReference type="Rhea" id="RHEA:49580"/>
        <dbReference type="ChEBI" id="CHEBI:33019"/>
        <dbReference type="ChEBI" id="CHEBI:59648"/>
        <dbReference type="ChEBI" id="CHEBI:131766"/>
        <dbReference type="EC" id="4.6.1.17"/>
    </reaction>
</comment>
<comment type="pathway">
    <text evidence="1">Cofactor biosynthesis; molybdopterin biosynthesis.</text>
</comment>
<comment type="subunit">
    <text evidence="1">Homohexamer; trimer of dimers.</text>
</comment>
<comment type="similarity">
    <text evidence="1">Belongs to the MoaC family.</text>
</comment>
<reference key="1">
    <citation type="submission" date="2006-08" db="EMBL/GenBank/DDBJ databases">
        <title>Complete sequence of chromosome 1 of Burkholderia cepacia AMMD.</title>
        <authorList>
            <person name="Copeland A."/>
            <person name="Lucas S."/>
            <person name="Lapidus A."/>
            <person name="Barry K."/>
            <person name="Detter J.C."/>
            <person name="Glavina del Rio T."/>
            <person name="Hammon N."/>
            <person name="Israni S."/>
            <person name="Pitluck S."/>
            <person name="Bruce D."/>
            <person name="Chain P."/>
            <person name="Malfatti S."/>
            <person name="Shin M."/>
            <person name="Vergez L."/>
            <person name="Schmutz J."/>
            <person name="Larimer F."/>
            <person name="Land M."/>
            <person name="Hauser L."/>
            <person name="Kyrpides N."/>
            <person name="Kim E."/>
            <person name="Parke J."/>
            <person name="Coenye T."/>
            <person name="Konstantinidis K."/>
            <person name="Ramette A."/>
            <person name="Tiedje J."/>
            <person name="Richardson P."/>
        </authorList>
    </citation>
    <scope>NUCLEOTIDE SEQUENCE [LARGE SCALE GENOMIC DNA]</scope>
    <source>
        <strain>ATCC BAA-244 / DSM 16087 / CCUG 44356 / LMG 19182 / AMMD</strain>
    </source>
</reference>
<protein>
    <recommendedName>
        <fullName evidence="1">Cyclic pyranopterin monophosphate synthase</fullName>
        <ecNumber evidence="1">4.6.1.17</ecNumber>
    </recommendedName>
    <alternativeName>
        <fullName evidence="1">Molybdenum cofactor biosynthesis protein C</fullName>
    </alternativeName>
</protein>
<keyword id="KW-0456">Lyase</keyword>
<keyword id="KW-0501">Molybdenum cofactor biosynthesis</keyword>